<proteinExistence type="evidence at protein level"/>
<reference key="1">
    <citation type="journal article" date="1984" name="J. Virol.">
        <title>Reovirus type 3 genome segment S4: nucleotide sequence of the gene encoding a major virion surface protein.</title>
        <authorList>
            <person name="Giantini M."/>
            <person name="Seliger L.S."/>
            <person name="Furuichi Y."/>
            <person name="Shatkin A.J."/>
        </authorList>
    </citation>
    <scope>NUCLEOTIDE SEQUENCE [GENOMIC RNA]</scope>
</reference>
<reference key="2">
    <citation type="journal article" date="2001" name="J. Virol.">
        <title>Adaptation of reovirus to growth in the presence of protease inhibitor E64 segregates with a mutation in the carboxy terminus of viral outer-capsid protein sigma3.</title>
        <authorList>
            <person name="Ebert D.H."/>
            <person name="Wetzel J.D."/>
            <person name="Brumbaugh D.E."/>
            <person name="Chance S.R."/>
            <person name="Stobie L.E."/>
            <person name="Baer G.S."/>
            <person name="Dermody T.S."/>
        </authorList>
    </citation>
    <scope>NUCLEOTIDE SEQUENCE [GENOMIC RNA]</scope>
    <source>
        <strain>Isolate D-EA1</strain>
        <strain>Isolate D-EA3</strain>
    </source>
</reference>
<reference key="3">
    <citation type="journal article" date="2007" name="Cell Host Microbe">
        <title>A plasmid-based reverse genetics system for animal double-stranded RNA viruses.</title>
        <authorList>
            <person name="Kobayashi T."/>
            <person name="Antar A.A."/>
            <person name="Boehme K.W."/>
            <person name="Danthi P."/>
            <person name="Eby E.A."/>
            <person name="Guglielmi K.M."/>
            <person name="Holm G.H."/>
            <person name="Johnson E.M."/>
            <person name="Maginnis M.S."/>
            <person name="Naik S."/>
            <person name="Skelton W.B."/>
            <person name="Wetzel J.D."/>
            <person name="Wilson G.J."/>
            <person name="Chappell J.D."/>
            <person name="Dermody T.S."/>
        </authorList>
    </citation>
    <scope>NUCLEOTIDE SEQUENCE [GENOMIC RNA]</scope>
    <source>
        <strain>Infectious clone</strain>
    </source>
</reference>
<reference key="4">
    <citation type="journal article" date="1997" name="Virology">
        <title>Double-stranded RNA-dependent protein kinase (PKR) is regulated by reovirus structural proteins.</title>
        <authorList>
            <person name="Yue Z."/>
            <person name="Shatkin A.J."/>
        </authorList>
    </citation>
    <scope>FUNCTION</scope>
</reference>
<reference key="5">
    <citation type="journal article" date="2002" name="J. Virol.">
        <title>A single mutation in the carboxy terminus of reovirus outer-capsid protein sigma 3 confers enhanced kinetics of sigma 3 proteolysis, resistance to inhibitors of viral disassembly, and alterations in sigma 3 structure.</title>
        <authorList>
            <person name="Wilson G.J."/>
            <person name="Nason E.L."/>
            <person name="Hardy C.S."/>
            <person name="Ebert D.H."/>
            <person name="Wetzel J.D."/>
            <person name="Venkataram Prasad B.V."/>
            <person name="Dermody T.S."/>
        </authorList>
    </citation>
    <scope>PROTEOLYTIC CLEAVAGE</scope>
    <scope>MUTAGENESIS OF TYR-354</scope>
</reference>
<reference key="6">
    <citation type="journal article" date="2003" name="J. Virol.">
        <title>Reovirus sigma NS and mu NS proteins form cytoplasmic inclusion structures in the absence of viral infection.</title>
        <authorList>
            <person name="Becker M.M."/>
            <person name="Peters T.R."/>
            <person name="Dermody T.S."/>
        </authorList>
    </citation>
    <scope>SUBCELLULAR LOCATION</scope>
</reference>
<reference key="7">
    <citation type="journal article" date="2001" name="EMBO J.">
        <title>Structure of the reovirus outer capsid and dsRNA-binding protein sigma3 at 1.8 A resolution.</title>
        <authorList>
            <person name="Olland A.M."/>
            <person name="Jane-Valbuena J."/>
            <person name="Schiff L.A."/>
            <person name="Nibert M.L."/>
            <person name="Harrison S.C."/>
        </authorList>
    </citation>
    <scope>X-RAY CRYSTALLOGRAPHY (1.8 ANGSTROMS)</scope>
    <scope>ZINC-FINGER</scope>
</reference>
<comment type="function">
    <text evidence="5">Stimulates translation by blocking the activation of the dsRNA-dependent protein kinase EIF2AK2/PKR, thereby inhibiting the host interferon response. Sigma3 prevents the activation of EIF2AK2 by competing with the kinase for dsRNA-binding.</text>
</comment>
<comment type="function">
    <text evidence="1">The viral outer shell polypeptides, of which sigma-3 is one, impose structural constraints that prevent elongation of nascent transcripts by the RNA-dependent RNA polymerase lambda-3.</text>
</comment>
<comment type="subunit">
    <text evidence="1">Heterohexamer of three sigma-3 and three Mu-1 proteins (By similarity). The RNA-binding form is probably a homodimer.</text>
</comment>
<comment type="subcellular location">
    <subcellularLocation>
        <location>Virion</location>
    </subcellularLocation>
    <subcellularLocation>
        <location evidence="4">Host cytoplasm</location>
    </subcellularLocation>
    <subcellularLocation>
        <location evidence="4">Host nucleus</location>
    </subcellularLocation>
    <text>Found in the outer capsid. Each subunit is positioned with the small lobe anchoring it to the protein mu1 on the surface of the virion, and the large lobe, the site of initial cleavages during entry-related proteolytic disassembly, protruding outwards.</text>
</comment>
<comment type="PTM">
    <text evidence="3">Cleaved during virus the endosomal proteolytic disassembly of the outer capsid.</text>
</comment>
<comment type="similarity">
    <text evidence="6">Belongs to the orthoreovirus sigma-3 protein family.</text>
</comment>
<protein>
    <recommendedName>
        <fullName>Outer capsid protein sigma-3</fullName>
        <shortName>Sigma3</shortName>
    </recommendedName>
</protein>
<organism>
    <name type="scientific">Reovirus type 3 (strain Dearing)</name>
    <name type="common">T3D</name>
    <name type="synonym">Mammalian orthoreovirus 3</name>
    <dbReference type="NCBI Taxonomy" id="10886"/>
    <lineage>
        <taxon>Viruses</taxon>
        <taxon>Riboviria</taxon>
        <taxon>Orthornavirae</taxon>
        <taxon>Duplornaviricota</taxon>
        <taxon>Resentoviricetes</taxon>
        <taxon>Reovirales</taxon>
        <taxon>Spinareoviridae</taxon>
        <taxon>Orthoreovirus</taxon>
        <taxon>Mammalian orthoreovirus</taxon>
    </lineage>
</organism>
<sequence>MEVCLPNGHQVVDLINNAFEGRVSIYSAQEGWDKTISAQPDMMVCGGAVVCMHCLGVVGSLQRKLKHLPHHRCNQQIRHQDYVDVQFADRVTAHWKRGMLSFVAQMHEMMNDVSPDDLDRVRTEGGSLVELNWLQVDPNSMFRSIHSSWTDPLQVVDDLDTKLDQYWTALNLMIDSSDLIPNFMMRDPSHAFNGVKLGGDARQTQFSRTFDSRSSLEWGVMVYDYSELEHDPSKGRAYRKELVTPARDFGHFGLSHYSRATTPILGKMPAVFSGMLTGNCKMYPFIKGTAKLKTVRKLVEAVNHAWGVEKIRYALGPGGMTGWYNRTMQQAPIVLTPAALTMFPDTIKFGDLNYPVMIGDPMILG</sequence>
<name>SIGM3_REOVD</name>
<feature type="chain" id="PRO_0000222752" description="Outer capsid protein sigma-3">
    <location>
        <begin position="1"/>
        <end position="365"/>
    </location>
</feature>
<feature type="zinc finger region" description="CCHC-type" evidence="2">
    <location>
        <begin position="51"/>
        <end position="73"/>
    </location>
</feature>
<feature type="sequence variant" description="In strain: Isolate D-EA1 and Isolate D-EA3; altered susceptibility to proteolysis during virus disassembly." evidence="3">
    <original>Y</original>
    <variation>H</variation>
    <location>
        <position position="354"/>
    </location>
</feature>
<feature type="sequence conflict" description="In Ref. 1; AAA47283." evidence="6" ref="1">
    <original>W</original>
    <variation>R</variation>
    <location>
        <position position="133"/>
    </location>
</feature>
<feature type="sequence conflict" description="In Ref. 1; AAA47283." evidence="6" ref="1">
    <original>G</original>
    <variation>E</variation>
    <location>
        <position position="198"/>
    </location>
</feature>
<feature type="helix" evidence="7">
    <location>
        <begin position="8"/>
        <end position="18"/>
    </location>
</feature>
<feature type="turn" evidence="7">
    <location>
        <begin position="19"/>
        <end position="21"/>
    </location>
</feature>
<feature type="strand" evidence="7">
    <location>
        <begin position="25"/>
        <end position="27"/>
    </location>
</feature>
<feature type="turn" evidence="7">
    <location>
        <begin position="28"/>
        <end position="30"/>
    </location>
</feature>
<feature type="strand" evidence="7">
    <location>
        <begin position="41"/>
        <end position="45"/>
    </location>
</feature>
<feature type="strand" evidence="7">
    <location>
        <begin position="48"/>
        <end position="51"/>
    </location>
</feature>
<feature type="turn" evidence="7">
    <location>
        <begin position="52"/>
        <end position="54"/>
    </location>
</feature>
<feature type="strand" evidence="7">
    <location>
        <begin position="57"/>
        <end position="60"/>
    </location>
</feature>
<feature type="helix" evidence="7">
    <location>
        <begin position="61"/>
        <end position="63"/>
    </location>
</feature>
<feature type="helix" evidence="7">
    <location>
        <begin position="79"/>
        <end position="111"/>
    </location>
</feature>
<feature type="helix" evidence="7">
    <location>
        <begin position="115"/>
        <end position="124"/>
    </location>
</feature>
<feature type="strand" evidence="7">
    <location>
        <begin position="126"/>
        <end position="130"/>
    </location>
</feature>
<feature type="helix" evidence="7">
    <location>
        <begin position="133"/>
        <end position="135"/>
    </location>
</feature>
<feature type="turn" evidence="7">
    <location>
        <begin position="141"/>
        <end position="143"/>
    </location>
</feature>
<feature type="helix" evidence="7">
    <location>
        <begin position="159"/>
        <end position="176"/>
    </location>
</feature>
<feature type="strand" evidence="7">
    <location>
        <begin position="180"/>
        <end position="186"/>
    </location>
</feature>
<feature type="helix" evidence="7">
    <location>
        <begin position="189"/>
        <end position="192"/>
    </location>
</feature>
<feature type="helix" evidence="7">
    <location>
        <begin position="199"/>
        <end position="203"/>
    </location>
</feature>
<feature type="strand" evidence="7">
    <location>
        <begin position="221"/>
        <end position="223"/>
    </location>
</feature>
<feature type="helix" evidence="7">
    <location>
        <begin position="226"/>
        <end position="230"/>
    </location>
</feature>
<feature type="helix" evidence="7">
    <location>
        <begin position="232"/>
        <end position="234"/>
    </location>
</feature>
<feature type="helix" evidence="7">
    <location>
        <begin position="236"/>
        <end position="242"/>
    </location>
</feature>
<feature type="helix" evidence="7">
    <location>
        <begin position="246"/>
        <end position="249"/>
    </location>
</feature>
<feature type="helix" evidence="7">
    <location>
        <begin position="252"/>
        <end position="254"/>
    </location>
</feature>
<feature type="strand" evidence="7">
    <location>
        <begin position="259"/>
        <end position="261"/>
    </location>
</feature>
<feature type="strand" evidence="7">
    <location>
        <begin position="270"/>
        <end position="272"/>
    </location>
</feature>
<feature type="helix" evidence="7">
    <location>
        <begin position="275"/>
        <end position="277"/>
    </location>
</feature>
<feature type="strand" evidence="7">
    <location>
        <begin position="282"/>
        <end position="284"/>
    </location>
</feature>
<feature type="helix" evidence="7">
    <location>
        <begin position="288"/>
        <end position="292"/>
    </location>
</feature>
<feature type="helix" evidence="7">
    <location>
        <begin position="293"/>
        <end position="295"/>
    </location>
</feature>
<feature type="helix" evidence="7">
    <location>
        <begin position="296"/>
        <end position="305"/>
    </location>
</feature>
<feature type="helix" evidence="7">
    <location>
        <begin position="308"/>
        <end position="315"/>
    </location>
</feature>
<feature type="helix" evidence="7">
    <location>
        <begin position="319"/>
        <end position="334"/>
    </location>
</feature>
<feature type="helix" evidence="7">
    <location>
        <begin position="338"/>
        <end position="341"/>
    </location>
</feature>
<feature type="strand" evidence="7">
    <location>
        <begin position="351"/>
        <end position="354"/>
    </location>
</feature>
<feature type="strand" evidence="7">
    <location>
        <begin position="356"/>
        <end position="358"/>
    </location>
</feature>
<feature type="strand" evidence="7">
    <location>
        <begin position="362"/>
        <end position="365"/>
    </location>
</feature>
<evidence type="ECO:0000250" key="1"/>
<evidence type="ECO:0000269" key="2">
    <source>
    </source>
</evidence>
<evidence type="ECO:0000269" key="3">
    <source>
    </source>
</evidence>
<evidence type="ECO:0000269" key="4">
    <source>
    </source>
</evidence>
<evidence type="ECO:0000269" key="5">
    <source>
    </source>
</evidence>
<evidence type="ECO:0000305" key="6"/>
<evidence type="ECO:0007829" key="7">
    <source>
        <dbReference type="PDB" id="1FN9"/>
    </source>
</evidence>
<gene>
    <name type="primary">S4</name>
</gene>
<keyword id="KW-0002">3D-structure</keyword>
<keyword id="KW-0167">Capsid protein</keyword>
<keyword id="KW-1035">Host cytoplasm</keyword>
<keyword id="KW-1048">Host nucleus</keyword>
<keyword id="KW-0945">Host-virus interaction</keyword>
<keyword id="KW-1090">Inhibition of host innate immune response by virus</keyword>
<keyword id="KW-1114">Inhibition of host interferon signaling pathway by virus</keyword>
<keyword id="KW-1102">Inhibition of host PKR by virus</keyword>
<keyword id="KW-0922">Interferon antiviral system evasion</keyword>
<keyword id="KW-0479">Metal-binding</keyword>
<keyword id="KW-1152">Outer capsid protein</keyword>
<keyword id="KW-0694">RNA-binding</keyword>
<keyword id="KW-0804">Transcription</keyword>
<keyword id="KW-0805">Transcription regulation</keyword>
<keyword id="KW-0810">Translation regulation</keyword>
<keyword id="KW-0899">Viral immunoevasion</keyword>
<keyword id="KW-0946">Virion</keyword>
<keyword id="KW-0862">Zinc</keyword>
<keyword id="KW-0863">Zinc-finger</keyword>
<accession>P03527</accession>
<accession>A4ZY29</accession>
<accession>Q99AV2</accession>
<organismHost>
    <name type="scientific">Mammalia</name>
    <dbReference type="NCBI Taxonomy" id="40674"/>
</organismHost>
<dbReference type="EMBL" id="K02739">
    <property type="protein sequence ID" value="AAA47283.1"/>
    <property type="molecule type" value="Genomic_RNA"/>
</dbReference>
<dbReference type="EMBL" id="AF332137">
    <property type="protein sequence ID" value="AAK07648.1"/>
    <property type="molecule type" value="Genomic_RNA"/>
</dbReference>
<dbReference type="EMBL" id="EF494444">
    <property type="protein sequence ID" value="ABP48922.1"/>
    <property type="molecule type" value="Genomic_RNA"/>
</dbReference>
<dbReference type="PIR" id="A04127">
    <property type="entry name" value="MNXRS3"/>
</dbReference>
<dbReference type="RefSeq" id="YP_010839450.1">
    <property type="nucleotide sequence ID" value="NC_077838.1"/>
</dbReference>
<dbReference type="PDB" id="1FN9">
    <property type="method" value="X-ray"/>
    <property type="resolution" value="1.80 A"/>
    <property type="chains" value="A/B=1-365"/>
</dbReference>
<dbReference type="PDB" id="7LUP">
    <property type="method" value="EM"/>
    <property type="resolution" value="6.20 A"/>
    <property type="chains" value="Q=1-365"/>
</dbReference>
<dbReference type="PDB" id="9CYT">
    <property type="method" value="EM"/>
    <property type="resolution" value="3.70 A"/>
    <property type="chains" value="G/I/L=1-365"/>
</dbReference>
<dbReference type="PDB" id="9CYY">
    <property type="method" value="EM"/>
    <property type="resolution" value="3.00 A"/>
    <property type="chains" value="G/I/L=1-365"/>
</dbReference>
<dbReference type="PDBsum" id="1FN9"/>
<dbReference type="PDBsum" id="7LUP"/>
<dbReference type="PDBsum" id="9CYT"/>
<dbReference type="PDBsum" id="9CYY"/>
<dbReference type="EMDB" id="EMD-13149"/>
<dbReference type="EMDB" id="EMD-13150"/>
<dbReference type="EMDB" id="EMD-23526"/>
<dbReference type="EMDB" id="EMD-46049"/>
<dbReference type="EMDB" id="EMD-46054"/>
<dbReference type="SMR" id="P03527"/>
<dbReference type="GeneID" id="80549140"/>
<dbReference type="EvolutionaryTrace" id="P03527"/>
<dbReference type="Proteomes" id="UP000006373">
    <property type="component" value="Genome"/>
</dbReference>
<dbReference type="GO" id="GO:0030430">
    <property type="term" value="C:host cell cytoplasm"/>
    <property type="evidence" value="ECO:0007669"/>
    <property type="project" value="UniProtKB-SubCell"/>
</dbReference>
<dbReference type="GO" id="GO:0042025">
    <property type="term" value="C:host cell nucleus"/>
    <property type="evidence" value="ECO:0007669"/>
    <property type="project" value="UniProtKB-SubCell"/>
</dbReference>
<dbReference type="GO" id="GO:0039624">
    <property type="term" value="C:viral outer capsid"/>
    <property type="evidence" value="ECO:0007669"/>
    <property type="project" value="UniProtKB-KW"/>
</dbReference>
<dbReference type="GO" id="GO:0030291">
    <property type="term" value="F:protein serine/threonine kinase inhibitor activity"/>
    <property type="evidence" value="ECO:0007669"/>
    <property type="project" value="UniProtKB-KW"/>
</dbReference>
<dbReference type="GO" id="GO:0003723">
    <property type="term" value="F:RNA binding"/>
    <property type="evidence" value="ECO:0007669"/>
    <property type="project" value="UniProtKB-KW"/>
</dbReference>
<dbReference type="GO" id="GO:0005198">
    <property type="term" value="F:structural molecule activity"/>
    <property type="evidence" value="ECO:0007669"/>
    <property type="project" value="InterPro"/>
</dbReference>
<dbReference type="GO" id="GO:0008270">
    <property type="term" value="F:zinc ion binding"/>
    <property type="evidence" value="ECO:0007669"/>
    <property type="project" value="UniProtKB-KW"/>
</dbReference>
<dbReference type="GO" id="GO:0006417">
    <property type="term" value="P:regulation of translation"/>
    <property type="evidence" value="ECO:0007669"/>
    <property type="project" value="UniProtKB-KW"/>
</dbReference>
<dbReference type="GO" id="GO:0052170">
    <property type="term" value="P:symbiont-mediated suppression of host innate immune response"/>
    <property type="evidence" value="ECO:0007669"/>
    <property type="project" value="UniProtKB-KW"/>
</dbReference>
<dbReference type="GO" id="GO:0039580">
    <property type="term" value="P:symbiont-mediated suppression of host PKR/eIFalpha signaling"/>
    <property type="evidence" value="ECO:0000269"/>
    <property type="project" value="SigSci"/>
</dbReference>
<dbReference type="GO" id="GO:0039502">
    <property type="term" value="P:symbiont-mediated suppression of host type I interferon-mediated signaling pathway"/>
    <property type="evidence" value="ECO:0007669"/>
    <property type="project" value="UniProtKB-KW"/>
</dbReference>
<dbReference type="GO" id="GO:0019058">
    <property type="term" value="P:viral life cycle"/>
    <property type="evidence" value="ECO:0007669"/>
    <property type="project" value="InterPro"/>
</dbReference>
<dbReference type="Gene3D" id="3.90.1320.10">
    <property type="entry name" value="Outer-capsid protein sigma 3, large lobe"/>
    <property type="match status" value="1"/>
</dbReference>
<dbReference type="Gene3D" id="3.90.1630.10">
    <property type="entry name" value="Outer-capsid protein sigma 3, small lobe"/>
    <property type="match status" value="1"/>
</dbReference>
<dbReference type="InterPro" id="IPR000153">
    <property type="entry name" value="Reo_capsid_sigma3"/>
</dbReference>
<dbReference type="InterPro" id="IPR023634">
    <property type="entry name" value="Reovirus_capsid_sigma-3_dom_sf"/>
</dbReference>
<dbReference type="Pfam" id="PF00979">
    <property type="entry name" value="Reovirus_cap"/>
    <property type="match status" value="1"/>
</dbReference>
<dbReference type="SUPFAM" id="SSF64465">
    <property type="entry name" value="Outer capsid protein sigma 3"/>
    <property type="match status" value="1"/>
</dbReference>